<keyword id="KW-0028">Amino-acid biosynthesis</keyword>
<keyword id="KW-0067">ATP-binding</keyword>
<keyword id="KW-0418">Kinase</keyword>
<keyword id="KW-0547">Nucleotide-binding</keyword>
<keyword id="KW-0791">Threonine biosynthesis</keyword>
<keyword id="KW-0808">Transferase</keyword>
<dbReference type="EC" id="2.7.1.39" evidence="1"/>
<dbReference type="EMBL" id="CP000738">
    <property type="protein sequence ID" value="ABR59384.1"/>
    <property type="molecule type" value="Genomic_DNA"/>
</dbReference>
<dbReference type="RefSeq" id="WP_011974730.1">
    <property type="nucleotide sequence ID" value="NC_009636.1"/>
</dbReference>
<dbReference type="RefSeq" id="YP_001326219.1">
    <property type="nucleotide sequence ID" value="NC_009636.1"/>
</dbReference>
<dbReference type="SMR" id="A6U6V4"/>
<dbReference type="STRING" id="366394.Smed_0528"/>
<dbReference type="KEGG" id="smd:Smed_0528"/>
<dbReference type="PATRIC" id="fig|366394.8.peg.3615"/>
<dbReference type="eggNOG" id="COG2334">
    <property type="taxonomic scope" value="Bacteria"/>
</dbReference>
<dbReference type="HOGENOM" id="CLU_053300_0_0_5"/>
<dbReference type="OrthoDB" id="9777460at2"/>
<dbReference type="UniPathway" id="UPA00050">
    <property type="reaction ID" value="UER00064"/>
</dbReference>
<dbReference type="Proteomes" id="UP000001108">
    <property type="component" value="Chromosome"/>
</dbReference>
<dbReference type="GO" id="GO:0005524">
    <property type="term" value="F:ATP binding"/>
    <property type="evidence" value="ECO:0007669"/>
    <property type="project" value="UniProtKB-KW"/>
</dbReference>
<dbReference type="GO" id="GO:0004413">
    <property type="term" value="F:homoserine kinase activity"/>
    <property type="evidence" value="ECO:0007669"/>
    <property type="project" value="UniProtKB-UniRule"/>
</dbReference>
<dbReference type="GO" id="GO:0009088">
    <property type="term" value="P:threonine biosynthetic process"/>
    <property type="evidence" value="ECO:0007669"/>
    <property type="project" value="UniProtKB-UniRule"/>
</dbReference>
<dbReference type="CDD" id="cd05153">
    <property type="entry name" value="HomoserineK_II"/>
    <property type="match status" value="1"/>
</dbReference>
<dbReference type="Gene3D" id="3.90.1200.10">
    <property type="match status" value="1"/>
</dbReference>
<dbReference type="Gene3D" id="3.30.200.20">
    <property type="entry name" value="Phosphorylase Kinase, domain 1"/>
    <property type="match status" value="1"/>
</dbReference>
<dbReference type="HAMAP" id="MF_00301">
    <property type="entry name" value="Homoser_kinase_2"/>
    <property type="match status" value="1"/>
</dbReference>
<dbReference type="InterPro" id="IPR002575">
    <property type="entry name" value="Aminoglycoside_PTrfase"/>
</dbReference>
<dbReference type="InterPro" id="IPR005280">
    <property type="entry name" value="Homoserine_kinase_II"/>
</dbReference>
<dbReference type="InterPro" id="IPR011009">
    <property type="entry name" value="Kinase-like_dom_sf"/>
</dbReference>
<dbReference type="InterPro" id="IPR050249">
    <property type="entry name" value="Pseudomonas-type_ThrB"/>
</dbReference>
<dbReference type="NCBIfam" id="NF003558">
    <property type="entry name" value="PRK05231.1"/>
    <property type="match status" value="1"/>
</dbReference>
<dbReference type="NCBIfam" id="TIGR00938">
    <property type="entry name" value="thrB_alt"/>
    <property type="match status" value="1"/>
</dbReference>
<dbReference type="PANTHER" id="PTHR21064:SF6">
    <property type="entry name" value="AMINOGLYCOSIDE PHOSPHOTRANSFERASE DOMAIN-CONTAINING PROTEIN"/>
    <property type="match status" value="1"/>
</dbReference>
<dbReference type="PANTHER" id="PTHR21064">
    <property type="entry name" value="AMINOGLYCOSIDE PHOSPHOTRANSFERASE DOMAIN-CONTAINING PROTEIN-RELATED"/>
    <property type="match status" value="1"/>
</dbReference>
<dbReference type="Pfam" id="PF01636">
    <property type="entry name" value="APH"/>
    <property type="match status" value="1"/>
</dbReference>
<dbReference type="SUPFAM" id="SSF56112">
    <property type="entry name" value="Protein kinase-like (PK-like)"/>
    <property type="match status" value="1"/>
</dbReference>
<gene>
    <name evidence="1" type="primary">thrB</name>
    <name type="ordered locus">Smed_0528</name>
</gene>
<protein>
    <recommendedName>
        <fullName evidence="1">Homoserine kinase</fullName>
        <shortName evidence="1">HK</shortName>
        <shortName evidence="1">HSK</shortName>
        <ecNumber evidence="1">2.7.1.39</ecNumber>
    </recommendedName>
</protein>
<sequence length="326" mass="36633">MAVYTDITEDELIRFLAAYEVGSLTSYKGIAEGVENSNFLLHTTRGAYILTLYEKRVNADDLPFFLGLMHHLAQRGLSCPLPLPRADGKLLGTLSGRPAAVISFLEGMWLRKPEAQHCREVGRALALMHQASEGFRLKRPNALSVEGWRPLWRNSEARADEVQAGLKDEIATELAFLEEHWPRALPEGVIHADLFPDNVFFLGDRLSGLIDFYFACNDFLAYDIAICLNSWCFEKDGSYNITKGMALLSGYESVRNLTAEEVEALPLLARGSALRFFLTRLYDWLTTPPGALVVKKDPLEYLTKIRFHRAIVSSAEYGLRREEASA</sequence>
<comment type="catalytic activity">
    <reaction evidence="1">
        <text>L-homoserine + ATP = O-phospho-L-homoserine + ADP + H(+)</text>
        <dbReference type="Rhea" id="RHEA:13985"/>
        <dbReference type="ChEBI" id="CHEBI:15378"/>
        <dbReference type="ChEBI" id="CHEBI:30616"/>
        <dbReference type="ChEBI" id="CHEBI:57476"/>
        <dbReference type="ChEBI" id="CHEBI:57590"/>
        <dbReference type="ChEBI" id="CHEBI:456216"/>
        <dbReference type="EC" id="2.7.1.39"/>
    </reaction>
</comment>
<comment type="pathway">
    <text evidence="1">Amino-acid biosynthesis; L-threonine biosynthesis; L-threonine from L-aspartate: step 4/5.</text>
</comment>
<comment type="similarity">
    <text evidence="1">Belongs to the pseudomonas-type ThrB family.</text>
</comment>
<evidence type="ECO:0000255" key="1">
    <source>
        <dbReference type="HAMAP-Rule" id="MF_00301"/>
    </source>
</evidence>
<proteinExistence type="inferred from homology"/>
<reference key="1">
    <citation type="submission" date="2007-06" db="EMBL/GenBank/DDBJ databases">
        <title>Complete sequence of Sinorhizobium medicae WSM419 chromosome.</title>
        <authorList>
            <consortium name="US DOE Joint Genome Institute"/>
            <person name="Copeland A."/>
            <person name="Lucas S."/>
            <person name="Lapidus A."/>
            <person name="Barry K."/>
            <person name="Glavina del Rio T."/>
            <person name="Dalin E."/>
            <person name="Tice H."/>
            <person name="Pitluck S."/>
            <person name="Chain P."/>
            <person name="Malfatti S."/>
            <person name="Shin M."/>
            <person name="Vergez L."/>
            <person name="Schmutz J."/>
            <person name="Larimer F."/>
            <person name="Land M."/>
            <person name="Hauser L."/>
            <person name="Kyrpides N."/>
            <person name="Mikhailova N."/>
            <person name="Reeve W.G."/>
            <person name="Richardson P."/>
        </authorList>
    </citation>
    <scope>NUCLEOTIDE SEQUENCE [LARGE SCALE GENOMIC DNA]</scope>
    <source>
        <strain>WSM419</strain>
    </source>
</reference>
<name>KHSE_SINMW</name>
<organism>
    <name type="scientific">Sinorhizobium medicae (strain WSM419)</name>
    <name type="common">Ensifer medicae</name>
    <dbReference type="NCBI Taxonomy" id="366394"/>
    <lineage>
        <taxon>Bacteria</taxon>
        <taxon>Pseudomonadati</taxon>
        <taxon>Pseudomonadota</taxon>
        <taxon>Alphaproteobacteria</taxon>
        <taxon>Hyphomicrobiales</taxon>
        <taxon>Rhizobiaceae</taxon>
        <taxon>Sinorhizobium/Ensifer group</taxon>
        <taxon>Sinorhizobium</taxon>
    </lineage>
</organism>
<feature type="chain" id="PRO_1000022589" description="Homoserine kinase">
    <location>
        <begin position="1"/>
        <end position="326"/>
    </location>
</feature>
<accession>A6U6V4</accession>